<proteinExistence type="evidence at protein level"/>
<sequence>MAGPQPLALQLEQLLNPRPSEADPEADPEEATAARVIDRFDEGEDGEGDFLVVGSIRKLASASLLDTDKRYCGKTTSRKAWNEDHWEQTLPGSSDEEISDEEGSGDEDSEGLGLEEYDEDDLGAAEEQECGDHRESKKSRSHSAKTPGFSVQSISDFEKFTKGMDDLGSSEEEEDEESGMEEGDDAEDSQGESEEDRAGDRNSEDDGVVMTFSSVKVSEEVEKGRAVKNQIALWDQLLEGRIKLQKALLTTNQLPQPDVFPLFKDKGGPEFSSALKNSHKALKALLRSLVGLQEELLFQYPDTRYLVDGTKPNAGSEEISSEDDELVEEKKQQRRRVPAKRKLEMEDYPSFMAKRFADFTVYRNRTLQKWHDKTKLASGKLGKGFGAFERSILTQIDHILMDKERLLRRTQTKRSVYRVLGKPEPAAQPVPESLPGEPEILPQAPANAHLKDLDEEIFDDDDFYHQLLRELIERKTSSLDPNDQVAMGRQWLAIQKLRSKIHKKVDRKASKGRKLRFHVLSKLLSFMAPIDHTTMNDDARTELYRSLFGQLHPPDEGHGD</sequence>
<protein>
    <recommendedName>
        <fullName>Protein AATF</fullName>
    </recommendedName>
    <alternativeName>
        <fullName>Apoptosis-antagonizing transcription factor</fullName>
    </alternativeName>
    <alternativeName>
        <fullName>Rb-binding protein Che-1</fullName>
    </alternativeName>
</protein>
<gene>
    <name evidence="12" type="primary">AATF</name>
    <name type="synonym">CHE1</name>
    <name type="synonym">DED</name>
    <name type="ORF">HSPC277</name>
</gene>
<name>AATF_HUMAN</name>
<keyword id="KW-0002">3D-structure</keyword>
<keyword id="KW-0007">Acetylation</keyword>
<keyword id="KW-0539">Nucleus</keyword>
<keyword id="KW-0597">Phosphoprotein</keyword>
<keyword id="KW-1267">Proteomics identification</keyword>
<keyword id="KW-1185">Reference proteome</keyword>
<comment type="function">
    <text evidence="5 6 7 9 10">Part of the small subunit (SSU) processome, first precursor of the small eukaryotic ribosomal subunit. During the assembly of the SSU processome in the nucleolus, many ribosome biogenesis factors, an RNA chaperone and ribosomal proteins associate with the nascent pre-rRNA and work in concert to generate RNA folding, modifications, rearrangements and cleavage as well as targeted degradation of pre-ribosomal RNA by the RNA exosome (PubMed:34516797). May function as a general inhibitor of the histone deacetylase HDAC1. Binding to the pocket region of RB1 may displace HDAC1 from RB1/E2F complexes, leading to activation of E2F target genes and cell cycle progression. Conversely, displacement of HDAC1 from SP1 bound to the CDKN1A promoter leads to increased expression of this CDK inhibitor and blocks cell cycle progression. Also antagonizes PAWR mediated induction of aberrant amyloid peptide production in Alzheimer disease (presenile and senile dementia), although the molecular basis for this phenomenon has not been described to date.</text>
</comment>
<comment type="subunit">
    <text evidence="2 5 6 7 8 10">Part of the small subunit (SSU) processome, composed of more than 70 proteins and the RNA chaperone small nucleolar RNA (snoRNA) U3 (PubMed:34516797). Interacts with POLR2J, RB1/RB, RBL1/P107 and RBL2/P130 (PubMed:10783144, PubMed:12450794). Interacts with PAWR and SP1 (PubMed:12847090, PubMed:14627703). May also bind MAPT (PubMed:14697667).</text>
</comment>
<comment type="interaction">
    <interactant intactId="EBI-372428">
        <id>Q9NY61</id>
    </interactant>
    <interactant intactId="EBI-77613">
        <id>P05067</id>
        <label>APP</label>
    </interactant>
    <organismsDiffer>false</organismsDiffer>
    <experiments>3</experiments>
</comment>
<comment type="interaction">
    <interactant intactId="EBI-372428">
        <id>Q9NY61</id>
    </interactant>
    <interactant intactId="EBI-495465">
        <id>Q13315</id>
        <label>ATM</label>
    </interactant>
    <organismsDiffer>false</organismsDiffer>
    <experiments>3</experiments>
</comment>
<comment type="interaction">
    <interactant intactId="EBI-372428">
        <id>Q9NY61</id>
    </interactant>
    <interactant intactId="EBI-1180783">
        <id>O96017</id>
        <label>CHEK2</label>
    </interactant>
    <organismsDiffer>false</organismsDiffer>
    <experiments>4</experiments>
</comment>
<comment type="interaction">
    <interactant intactId="EBI-372428">
        <id>Q9NY61</id>
    </interactant>
    <interactant intactId="EBI-477622">
        <id>Q92830</id>
        <label>KAT2A</label>
    </interactant>
    <organismsDiffer>false</organismsDiffer>
    <experiments>4</experiments>
</comment>
<comment type="interaction">
    <interactant intactId="EBI-372428">
        <id>Q9NY61</id>
    </interactant>
    <interactant intactId="EBI-743811">
        <id>Q8NEH6</id>
        <label>MNS1</label>
    </interactant>
    <organismsDiffer>false</organismsDiffer>
    <experiments>3</experiments>
</comment>
<comment type="interaction">
    <interactant intactId="EBI-372428">
        <id>Q9NY61</id>
    </interactant>
    <interactant intactId="EBI-9995414">
        <id>Q8NEJ9</id>
        <label>NGDN</label>
    </interactant>
    <organismsDiffer>false</organismsDiffer>
    <experiments>6</experiments>
</comment>
<comment type="interaction">
    <interactant intactId="EBI-372428">
        <id>Q9NY61</id>
    </interactant>
    <interactant intactId="EBI-9090282">
        <id>P27986-2</id>
        <label>PIK3R1</label>
    </interactant>
    <organismsDiffer>false</organismsDiffer>
    <experiments>3</experiments>
</comment>
<comment type="interaction">
    <interactant intactId="EBI-372428">
        <id>Q9NY61</id>
    </interactant>
    <interactant intactId="EBI-413628">
        <id>P63000</id>
        <label>RAC1</label>
    </interactant>
    <organismsDiffer>false</organismsDiffer>
    <experiments>3</experiments>
</comment>
<comment type="interaction">
    <interactant intactId="EBI-372428">
        <id>Q9NY61</id>
    </interactant>
    <interactant intactId="EBI-73886">
        <id>Q04206</id>
        <label>RELA</label>
    </interactant>
    <organismsDiffer>false</organismsDiffer>
    <experiments>3</experiments>
</comment>
<comment type="interaction">
    <interactant intactId="EBI-372428">
        <id>Q9NY61</id>
    </interactant>
    <interactant intactId="EBI-298336">
        <id>P08047</id>
        <label>SP1</label>
    </interactant>
    <organismsDiffer>false</organismsDiffer>
    <experiments>2</experiments>
</comment>
<comment type="interaction">
    <interactant intactId="EBI-372428">
        <id>Q9NY61</id>
    </interactant>
    <interactant intactId="EBI-742268">
        <id>O75478</id>
        <label>TADA2A</label>
    </interactant>
    <organismsDiffer>false</organismsDiffer>
    <experiments>4</experiments>
</comment>
<comment type="interaction">
    <interactant intactId="EBI-372428">
        <id>Q9NY61</id>
    </interactant>
    <interactant intactId="EBI-2512219">
        <id>Q86TJ2</id>
        <label>TADA2B</label>
    </interactant>
    <organismsDiffer>false</organismsDiffer>
    <experiments>4</experiments>
</comment>
<comment type="interaction">
    <interactant intactId="EBI-372428">
        <id>Q9NY61</id>
    </interactant>
    <interactant intactId="EBI-473249">
        <id>O75528</id>
        <label>TADA3</label>
    </interactant>
    <organismsDiffer>false</organismsDiffer>
    <experiments>2</experiments>
</comment>
<comment type="interaction">
    <interactant intactId="EBI-372428">
        <id>Q9NY61</id>
    </interactant>
    <interactant intactId="EBI-8034418">
        <id>Q6ZWQ9</id>
        <label>Myl12a</label>
    </interactant>
    <organismsDiffer>true</organismsDiffer>
    <experiments>3</experiments>
</comment>
<comment type="subcellular location">
    <subcellularLocation>
        <location evidence="4 10">Nucleus</location>
        <location evidence="4 10">Nucleolus</location>
    </subcellularLocation>
</comment>
<comment type="tissue specificity">
    <text evidence="2 3">Ubiquitously expressed. Expressed at high levels in brain, heart, kidney, placenta and thymus.</text>
</comment>
<comment type="PTM">
    <text>Hyperphosphorylated during the G1/S phase transition.</text>
</comment>
<comment type="similarity">
    <text evidence="11">Belongs to the AATF family.</text>
</comment>
<comment type="sequence caution" evidence="11">
    <conflict type="frameshift">
        <sequence resource="EMBL-CDS" id="AAD52016"/>
    </conflict>
</comment>
<comment type="online information" name="Atlas of Genetics and Cytogenetics in Oncology and Haematology">
    <link uri="https://atlasgeneticsoncology.org/gene/534/AATF"/>
</comment>
<organism>
    <name type="scientific">Homo sapiens</name>
    <name type="common">Human</name>
    <dbReference type="NCBI Taxonomy" id="9606"/>
    <lineage>
        <taxon>Eukaryota</taxon>
        <taxon>Metazoa</taxon>
        <taxon>Chordata</taxon>
        <taxon>Craniata</taxon>
        <taxon>Vertebrata</taxon>
        <taxon>Euteleostomi</taxon>
        <taxon>Mammalia</taxon>
        <taxon>Eutheria</taxon>
        <taxon>Euarchontoglires</taxon>
        <taxon>Primates</taxon>
        <taxon>Haplorrhini</taxon>
        <taxon>Catarrhini</taxon>
        <taxon>Hominidae</taxon>
        <taxon>Homo</taxon>
    </lineage>
</organism>
<reference key="1">
    <citation type="journal article" date="2000" name="Biochem. Biophys. Res. Commun.">
        <title>Identification of novel transcription factor-like gene from human intestinal cells.</title>
        <authorList>
            <person name="Lindfors K."/>
            <person name="Halttunen T."/>
            <person name="Huotari P."/>
            <person name="Nupponen N."/>
            <person name="Vihinen M."/>
            <person name="Visakorpi T."/>
            <person name="Maki M."/>
            <person name="Kainulainen H."/>
        </authorList>
    </citation>
    <scope>NUCLEOTIDE SEQUENCE [MRNA]</scope>
    <scope>TISSUE SPECIFICITY</scope>
</reference>
<reference key="2">
    <citation type="journal article" date="2000" name="FASEB J.">
        <title>Identification of a novel partner of RNA polymerase II subunit 11, Che-1, which interacts with and affects the growth suppression function of Rb.</title>
        <authorList>
            <person name="Fanciulli M."/>
            <person name="Bruno T."/>
            <person name="Di Padova M."/>
            <person name="De Angelis R."/>
            <person name="Iezzi S."/>
            <person name="Iacobini C."/>
            <person name="Floridi A."/>
            <person name="Passananti C."/>
        </authorList>
    </citation>
    <scope>NUCLEOTIDE SEQUENCE [MRNA]</scope>
    <scope>INTERACTION WITH POLR2J AND RB1</scope>
    <scope>TISSUE SPECIFICITY</scope>
    <source>
        <tissue>Skeletal muscle</tissue>
    </source>
</reference>
<reference key="3">
    <citation type="journal article" date="2004" name="Nat. Genet.">
        <title>Complete sequencing and characterization of 21,243 full-length human cDNAs.</title>
        <authorList>
            <person name="Ota T."/>
            <person name="Suzuki Y."/>
            <person name="Nishikawa T."/>
            <person name="Otsuki T."/>
            <person name="Sugiyama T."/>
            <person name="Irie R."/>
            <person name="Wakamatsu A."/>
            <person name="Hayashi K."/>
            <person name="Sato H."/>
            <person name="Nagai K."/>
            <person name="Kimura K."/>
            <person name="Makita H."/>
            <person name="Sekine M."/>
            <person name="Obayashi M."/>
            <person name="Nishi T."/>
            <person name="Shibahara T."/>
            <person name="Tanaka T."/>
            <person name="Ishii S."/>
            <person name="Yamamoto J."/>
            <person name="Saito K."/>
            <person name="Kawai Y."/>
            <person name="Isono Y."/>
            <person name="Nakamura Y."/>
            <person name="Nagahari K."/>
            <person name="Murakami K."/>
            <person name="Yasuda T."/>
            <person name="Iwayanagi T."/>
            <person name="Wagatsuma M."/>
            <person name="Shiratori A."/>
            <person name="Sudo H."/>
            <person name="Hosoiri T."/>
            <person name="Kaku Y."/>
            <person name="Kodaira H."/>
            <person name="Kondo H."/>
            <person name="Sugawara M."/>
            <person name="Takahashi M."/>
            <person name="Kanda K."/>
            <person name="Yokoi T."/>
            <person name="Furuya T."/>
            <person name="Kikkawa E."/>
            <person name="Omura Y."/>
            <person name="Abe K."/>
            <person name="Kamihara K."/>
            <person name="Katsuta N."/>
            <person name="Sato K."/>
            <person name="Tanikawa M."/>
            <person name="Yamazaki M."/>
            <person name="Ninomiya K."/>
            <person name="Ishibashi T."/>
            <person name="Yamashita H."/>
            <person name="Murakawa K."/>
            <person name="Fujimori K."/>
            <person name="Tanai H."/>
            <person name="Kimata M."/>
            <person name="Watanabe M."/>
            <person name="Hiraoka S."/>
            <person name="Chiba Y."/>
            <person name="Ishida S."/>
            <person name="Ono Y."/>
            <person name="Takiguchi S."/>
            <person name="Watanabe S."/>
            <person name="Yosida M."/>
            <person name="Hotuta T."/>
            <person name="Kusano J."/>
            <person name="Kanehori K."/>
            <person name="Takahashi-Fujii A."/>
            <person name="Hara H."/>
            <person name="Tanase T.-O."/>
            <person name="Nomura Y."/>
            <person name="Togiya S."/>
            <person name="Komai F."/>
            <person name="Hara R."/>
            <person name="Takeuchi K."/>
            <person name="Arita M."/>
            <person name="Imose N."/>
            <person name="Musashino K."/>
            <person name="Yuuki H."/>
            <person name="Oshima A."/>
            <person name="Sasaki N."/>
            <person name="Aotsuka S."/>
            <person name="Yoshikawa Y."/>
            <person name="Matsunawa H."/>
            <person name="Ichihara T."/>
            <person name="Shiohata N."/>
            <person name="Sano S."/>
            <person name="Moriya S."/>
            <person name="Momiyama H."/>
            <person name="Satoh N."/>
            <person name="Takami S."/>
            <person name="Terashima Y."/>
            <person name="Suzuki O."/>
            <person name="Nakagawa S."/>
            <person name="Senoh A."/>
            <person name="Mizoguchi H."/>
            <person name="Goto Y."/>
            <person name="Shimizu F."/>
            <person name="Wakebe H."/>
            <person name="Hishigaki H."/>
            <person name="Watanabe T."/>
            <person name="Sugiyama A."/>
            <person name="Takemoto M."/>
            <person name="Kawakami B."/>
            <person name="Yamazaki M."/>
            <person name="Watanabe K."/>
            <person name="Kumagai A."/>
            <person name="Itakura S."/>
            <person name="Fukuzumi Y."/>
            <person name="Fujimori Y."/>
            <person name="Komiyama M."/>
            <person name="Tashiro H."/>
            <person name="Tanigami A."/>
            <person name="Fujiwara T."/>
            <person name="Ono T."/>
            <person name="Yamada K."/>
            <person name="Fujii Y."/>
            <person name="Ozaki K."/>
            <person name="Hirao M."/>
            <person name="Ohmori Y."/>
            <person name="Kawabata A."/>
            <person name="Hikiji T."/>
            <person name="Kobatake N."/>
            <person name="Inagaki H."/>
            <person name="Ikema Y."/>
            <person name="Okamoto S."/>
            <person name="Okitani R."/>
            <person name="Kawakami T."/>
            <person name="Noguchi S."/>
            <person name="Itoh T."/>
            <person name="Shigeta K."/>
            <person name="Senba T."/>
            <person name="Matsumura K."/>
            <person name="Nakajima Y."/>
            <person name="Mizuno T."/>
            <person name="Morinaga M."/>
            <person name="Sasaki M."/>
            <person name="Togashi T."/>
            <person name="Oyama M."/>
            <person name="Hata H."/>
            <person name="Watanabe M."/>
            <person name="Komatsu T."/>
            <person name="Mizushima-Sugano J."/>
            <person name="Satoh T."/>
            <person name="Shirai Y."/>
            <person name="Takahashi Y."/>
            <person name="Nakagawa K."/>
            <person name="Okumura K."/>
            <person name="Nagase T."/>
            <person name="Nomura N."/>
            <person name="Kikuchi H."/>
            <person name="Masuho Y."/>
            <person name="Yamashita R."/>
            <person name="Nakai K."/>
            <person name="Yada T."/>
            <person name="Nakamura Y."/>
            <person name="Ohara O."/>
            <person name="Isogai T."/>
            <person name="Sugano S."/>
        </authorList>
    </citation>
    <scope>NUCLEOTIDE SEQUENCE [LARGE SCALE MRNA]</scope>
    <source>
        <tissue>Testis</tissue>
    </source>
</reference>
<reference key="4">
    <citation type="journal article" date="2006" name="Nature">
        <title>DNA sequence of human chromosome 17 and analysis of rearrangement in the human lineage.</title>
        <authorList>
            <person name="Zody M.C."/>
            <person name="Garber M."/>
            <person name="Adams D.J."/>
            <person name="Sharpe T."/>
            <person name="Harrow J."/>
            <person name="Lupski J.R."/>
            <person name="Nicholson C."/>
            <person name="Searle S.M."/>
            <person name="Wilming L."/>
            <person name="Young S.K."/>
            <person name="Abouelleil A."/>
            <person name="Allen N.R."/>
            <person name="Bi W."/>
            <person name="Bloom T."/>
            <person name="Borowsky M.L."/>
            <person name="Bugalter B.E."/>
            <person name="Butler J."/>
            <person name="Chang J.L."/>
            <person name="Chen C.-K."/>
            <person name="Cook A."/>
            <person name="Corum B."/>
            <person name="Cuomo C.A."/>
            <person name="de Jong P.J."/>
            <person name="DeCaprio D."/>
            <person name="Dewar K."/>
            <person name="FitzGerald M."/>
            <person name="Gilbert J."/>
            <person name="Gibson R."/>
            <person name="Gnerre S."/>
            <person name="Goldstein S."/>
            <person name="Grafham D.V."/>
            <person name="Grocock R."/>
            <person name="Hafez N."/>
            <person name="Hagopian D.S."/>
            <person name="Hart E."/>
            <person name="Norman C.H."/>
            <person name="Humphray S."/>
            <person name="Jaffe D.B."/>
            <person name="Jones M."/>
            <person name="Kamal M."/>
            <person name="Khodiyar V.K."/>
            <person name="LaButti K."/>
            <person name="Laird G."/>
            <person name="Lehoczky J."/>
            <person name="Liu X."/>
            <person name="Lokyitsang T."/>
            <person name="Loveland J."/>
            <person name="Lui A."/>
            <person name="Macdonald P."/>
            <person name="Major J.E."/>
            <person name="Matthews L."/>
            <person name="Mauceli E."/>
            <person name="McCarroll S.A."/>
            <person name="Mihalev A.H."/>
            <person name="Mudge J."/>
            <person name="Nguyen C."/>
            <person name="Nicol R."/>
            <person name="O'Leary S.B."/>
            <person name="Osoegawa K."/>
            <person name="Schwartz D.C."/>
            <person name="Shaw-Smith C."/>
            <person name="Stankiewicz P."/>
            <person name="Steward C."/>
            <person name="Swarbreck D."/>
            <person name="Venkataraman V."/>
            <person name="Whittaker C.A."/>
            <person name="Yang X."/>
            <person name="Zimmer A.R."/>
            <person name="Bradley A."/>
            <person name="Hubbard T."/>
            <person name="Birren B.W."/>
            <person name="Rogers J."/>
            <person name="Lander E.S."/>
            <person name="Nusbaum C."/>
        </authorList>
    </citation>
    <scope>NUCLEOTIDE SEQUENCE [LARGE SCALE GENOMIC DNA]</scope>
</reference>
<reference key="5">
    <citation type="submission" date="2005-07" db="EMBL/GenBank/DDBJ databases">
        <authorList>
            <person name="Mural R.J."/>
            <person name="Istrail S."/>
            <person name="Sutton G.G."/>
            <person name="Florea L."/>
            <person name="Halpern A.L."/>
            <person name="Mobarry C.M."/>
            <person name="Lippert R."/>
            <person name="Walenz B."/>
            <person name="Shatkay H."/>
            <person name="Dew I."/>
            <person name="Miller J.R."/>
            <person name="Flanigan M.J."/>
            <person name="Edwards N.J."/>
            <person name="Bolanos R."/>
            <person name="Fasulo D."/>
            <person name="Halldorsson B.V."/>
            <person name="Hannenhalli S."/>
            <person name="Turner R."/>
            <person name="Yooseph S."/>
            <person name="Lu F."/>
            <person name="Nusskern D.R."/>
            <person name="Shue B.C."/>
            <person name="Zheng X.H."/>
            <person name="Zhong F."/>
            <person name="Delcher A.L."/>
            <person name="Huson D.H."/>
            <person name="Kravitz S.A."/>
            <person name="Mouchard L."/>
            <person name="Reinert K."/>
            <person name="Remington K.A."/>
            <person name="Clark A.G."/>
            <person name="Waterman M.S."/>
            <person name="Eichler E.E."/>
            <person name="Adams M.D."/>
            <person name="Hunkapiller M.W."/>
            <person name="Myers E.W."/>
            <person name="Venter J.C."/>
        </authorList>
    </citation>
    <scope>NUCLEOTIDE SEQUENCE [LARGE SCALE GENOMIC DNA]</scope>
</reference>
<reference key="6">
    <citation type="journal article" date="2004" name="Genome Res.">
        <title>The status, quality, and expansion of the NIH full-length cDNA project: the Mammalian Gene Collection (MGC).</title>
        <authorList>
            <consortium name="The MGC Project Team"/>
        </authorList>
    </citation>
    <scope>NUCLEOTIDE SEQUENCE [LARGE SCALE MRNA]</scope>
    <source>
        <tissue>Skin</tissue>
    </source>
</reference>
<reference key="7">
    <citation type="submission" date="1999-05" db="EMBL/GenBank/DDBJ databases">
        <title>Human partial CDS from CD34+ stem cells.</title>
        <authorList>
            <person name="Ye M."/>
            <person name="Zhang Q.-H."/>
            <person name="Zhou J."/>
            <person name="Shen Y."/>
            <person name="Wu X.-Y."/>
            <person name="Guan Z.Q."/>
            <person name="Wang L."/>
            <person name="Fan H.-Y."/>
            <person name="Mao Y.-F."/>
            <person name="Dai M."/>
            <person name="Huang Q.-H."/>
            <person name="Chen S.-J."/>
            <person name="Chen Z."/>
        </authorList>
    </citation>
    <scope>NUCLEOTIDE SEQUENCE [LARGE SCALE MRNA] OF 361-560</scope>
    <source>
        <tissue>Umbilical cord blood</tissue>
    </source>
</reference>
<reference key="8">
    <citation type="journal article" date="2002" name="Cancer Cell">
        <title>Che-1 affects cell growth by interfering with the recruitment of HDAC1 by Rb.</title>
        <authorList>
            <person name="Bruno T."/>
            <person name="De Angelis R."/>
            <person name="De Nicola F."/>
            <person name="Barbato C."/>
            <person name="Di Padova M."/>
            <person name="Corbi N."/>
            <person name="Libri V."/>
            <person name="Benassi B."/>
            <person name="Mattei E."/>
            <person name="Chersi A."/>
            <person name="Soddu S."/>
            <person name="Floridi A."/>
            <person name="Passananti C."/>
            <person name="Fanciulli M."/>
        </authorList>
    </citation>
    <scope>FUNCTION</scope>
    <scope>PHOSPHORYLATION AT THE G1/S TRANSITION</scope>
    <scope>INTERACTION WITH RB1; RBL1 AND RBL2</scope>
</reference>
<reference key="9">
    <citation type="journal article" date="2002" name="Mol. Biol. Cell">
        <title>Functional proteomic analysis of human nucleolus.</title>
        <authorList>
            <person name="Scherl A."/>
            <person name="Coute Y."/>
            <person name="Deon C."/>
            <person name="Calle A."/>
            <person name="Kindbeiter K."/>
            <person name="Sanchez J.-C."/>
            <person name="Greco A."/>
            <person name="Hochstrasser D.F."/>
            <person name="Diaz J.-J."/>
        </authorList>
    </citation>
    <scope>SUBCELLULAR LOCATION [LARGE SCALE ANALYSIS]</scope>
    <source>
        <tissue>Cervix carcinoma</tissue>
    </source>
</reference>
<reference key="10">
    <citation type="journal article" date="2003" name="J. Biol. Chem.">
        <title>Che-1 arrests human colon carcinoma cell proliferation by displacing HDAC1 from the p21WAF1/CIP1 promoter.</title>
        <authorList>
            <person name="Di Padova M."/>
            <person name="Bruno T."/>
            <person name="De Nicola F."/>
            <person name="Iezzi S."/>
            <person name="D'Angelo C."/>
            <person name="Gallo R."/>
            <person name="Nicosia D."/>
            <person name="Corbi N."/>
            <person name="Biroccio A."/>
            <person name="Floridi A."/>
            <person name="Passananti C."/>
            <person name="Fanciulli M."/>
        </authorList>
    </citation>
    <scope>FUNCTION</scope>
    <scope>INTERACTION WITH SP1</scope>
</reference>
<reference key="11">
    <citation type="journal article" date="2003" name="Mol. Cell. Neurosci.">
        <title>Rb binding protein Che-1 interacts with Tau in cerebellar granule neurons. Modulation during neuronal apoptosis.</title>
        <authorList>
            <person name="Barbato C."/>
            <person name="Corbi N."/>
            <person name="Canu N."/>
            <person name="Fanciulli M."/>
            <person name="Serafino A."/>
            <person name="Ciotti M."/>
            <person name="Libri V."/>
            <person name="Bruno T."/>
            <person name="Amadoro G."/>
            <person name="De Angelis R."/>
            <person name="Calissano P."/>
            <person name="Passananti C."/>
        </authorList>
    </citation>
    <scope>INTERACTION WITH MAPT</scope>
</reference>
<reference key="12">
    <citation type="journal article" date="2004" name="J. Biol. Chem.">
        <title>AATF inhibits aberrant production of amyloid beta peptide 1-42 by interacting directly with Par-4.</title>
        <authorList>
            <person name="Guo Q."/>
            <person name="Xie J."/>
        </authorList>
    </citation>
    <scope>FUNCTION</scope>
    <scope>INTERACTION WITH PAWR</scope>
</reference>
<reference key="13">
    <citation type="journal article" date="2004" name="Neurobiol. Dis.">
        <title>AATF protects neural cells against oxidative damage induced by amyloid beta-peptide.</title>
        <authorList>
            <person name="Xie J."/>
            <person name="Guo Q."/>
        </authorList>
    </citation>
    <scope>FUNCTION</scope>
</reference>
<reference key="14">
    <citation type="journal article" date="2008" name="Proc. Natl. Acad. Sci. U.S.A.">
        <title>A quantitative atlas of mitotic phosphorylation.</title>
        <authorList>
            <person name="Dephoure N."/>
            <person name="Zhou C."/>
            <person name="Villen J."/>
            <person name="Beausoleil S.A."/>
            <person name="Bakalarski C.E."/>
            <person name="Elledge S.J."/>
            <person name="Gygi S.P."/>
        </authorList>
    </citation>
    <scope>PHOSPHORYLATION [LARGE SCALE ANALYSIS] AT SER-316; SER-320 AND SER-321</scope>
    <scope>IDENTIFICATION BY MASS SPECTROMETRY [LARGE SCALE ANALYSIS]</scope>
    <source>
        <tissue>Cervix carcinoma</tissue>
    </source>
</reference>
<reference key="15">
    <citation type="journal article" date="2009" name="Anal. Chem.">
        <title>Lys-N and trypsin cover complementary parts of the phosphoproteome in a refined SCX-based approach.</title>
        <authorList>
            <person name="Gauci S."/>
            <person name="Helbig A.O."/>
            <person name="Slijper M."/>
            <person name="Krijgsveld J."/>
            <person name="Heck A.J."/>
            <person name="Mohammed S."/>
        </authorList>
    </citation>
    <scope>ACETYLATION [LARGE SCALE ANALYSIS] AT ALA-2</scope>
    <scope>CLEAVAGE OF INITIATOR METHIONINE [LARGE SCALE ANALYSIS]</scope>
    <scope>IDENTIFICATION BY MASS SPECTROMETRY [LARGE SCALE ANALYSIS]</scope>
</reference>
<reference key="16">
    <citation type="journal article" date="2009" name="Sci. Signal.">
        <title>Quantitative phosphoproteomic analysis of T cell receptor signaling reveals system-wide modulation of protein-protein interactions.</title>
        <authorList>
            <person name="Mayya V."/>
            <person name="Lundgren D.H."/>
            <person name="Hwang S.-I."/>
            <person name="Rezaul K."/>
            <person name="Wu L."/>
            <person name="Eng J.K."/>
            <person name="Rodionov V."/>
            <person name="Han D.K."/>
        </authorList>
    </citation>
    <scope>PHOSPHORYLATION [LARGE SCALE ANALYSIS] AT SER-316; SER-320 AND SER-321</scope>
    <scope>IDENTIFICATION BY MASS SPECTROMETRY [LARGE SCALE ANALYSIS]</scope>
    <source>
        <tissue>Leukemic T-cell</tissue>
    </source>
</reference>
<reference key="17">
    <citation type="journal article" date="2010" name="Sci. Signal.">
        <title>Quantitative phosphoproteomics reveals widespread full phosphorylation site occupancy during mitosis.</title>
        <authorList>
            <person name="Olsen J.V."/>
            <person name="Vermeulen M."/>
            <person name="Santamaria A."/>
            <person name="Kumar C."/>
            <person name="Miller M.L."/>
            <person name="Jensen L.J."/>
            <person name="Gnad F."/>
            <person name="Cox J."/>
            <person name="Jensen T.S."/>
            <person name="Nigg E.A."/>
            <person name="Brunak S."/>
            <person name="Mann M."/>
        </authorList>
    </citation>
    <scope>PHOSPHORYLATION [LARGE SCALE ANALYSIS] AT SER-203; SER-316; SER-320 AND SER-321</scope>
    <scope>IDENTIFICATION BY MASS SPECTROMETRY [LARGE SCALE ANALYSIS]</scope>
    <source>
        <tissue>Cervix carcinoma</tissue>
    </source>
</reference>
<reference key="18">
    <citation type="journal article" date="2011" name="Sci. Signal.">
        <title>System-wide temporal characterization of the proteome and phosphoproteome of human embryonic stem cell differentiation.</title>
        <authorList>
            <person name="Rigbolt K.T."/>
            <person name="Prokhorova T.A."/>
            <person name="Akimov V."/>
            <person name="Henningsen J."/>
            <person name="Johansen P.T."/>
            <person name="Kratchmarova I."/>
            <person name="Kassem M."/>
            <person name="Mann M."/>
            <person name="Olsen J.V."/>
            <person name="Blagoev B."/>
        </authorList>
    </citation>
    <scope>PHOSPHORYLATION [LARGE SCALE ANALYSIS] AT SER-203; SER-316; SER-320 AND SER-321</scope>
    <scope>IDENTIFICATION BY MASS SPECTROMETRY [LARGE SCALE ANALYSIS]</scope>
</reference>
<reference key="19">
    <citation type="journal article" date="2013" name="J. Proteome Res.">
        <title>Toward a comprehensive characterization of a human cancer cell phosphoproteome.</title>
        <authorList>
            <person name="Zhou H."/>
            <person name="Di Palma S."/>
            <person name="Preisinger C."/>
            <person name="Peng M."/>
            <person name="Polat A.N."/>
            <person name="Heck A.J."/>
            <person name="Mohammed S."/>
        </authorList>
    </citation>
    <scope>PHOSPHORYLATION [LARGE SCALE ANALYSIS] AT SER-61; SER-63; SER-150; SER-155; SER-203 AND SER-273</scope>
    <scope>IDENTIFICATION BY MASS SPECTROMETRY [LARGE SCALE ANALYSIS]</scope>
    <source>
        <tissue>Cervix carcinoma</tissue>
        <tissue>Erythroleukemia</tissue>
    </source>
</reference>
<reference evidence="13 14" key="20">
    <citation type="journal article" date="2021" name="Science">
        <title>Nucleolar maturation of the human small subunit processome.</title>
        <authorList>
            <person name="Singh S."/>
            <person name="Vanden Broeck A."/>
            <person name="Miller L."/>
            <person name="Chaker-Margot M."/>
            <person name="Klinge S."/>
        </authorList>
    </citation>
    <scope>STRUCTURE BY ELECTRON MICROSCOPY (3.60 ANGSTROMS)</scope>
    <scope>FUNCTION</scope>
    <scope>SUBUNIT</scope>
    <scope>SUBCELLULAR LOCATION</scope>
</reference>
<accession>Q9NY61</accession>
<accession>A6NCJ6</accession>
<accession>B3KQ26</accession>
<accession>Q9P0A4</accession>
<accession>Q9UNX5</accession>
<feature type="initiator methionine" description="Removed" evidence="16">
    <location>
        <position position="1"/>
    </location>
</feature>
<feature type="chain" id="PRO_0000056616" description="Protein AATF">
    <location>
        <begin position="2"/>
        <end position="560"/>
    </location>
</feature>
<feature type="region of interest" description="Disordered" evidence="1">
    <location>
        <begin position="76"/>
        <end position="208"/>
    </location>
</feature>
<feature type="region of interest" description="POLR2J binding">
    <location>
        <begin position="273"/>
        <end position="315"/>
    </location>
</feature>
<feature type="region of interest" description="Disordered" evidence="1">
    <location>
        <begin position="309"/>
        <end position="333"/>
    </location>
</feature>
<feature type="region of interest" description="RB1 binding">
    <location>
        <begin position="316"/>
        <end position="372"/>
    </location>
</feature>
<feature type="region of interest" description="RB1 and SP1 binding">
    <location>
        <begin position="373"/>
        <end position="472"/>
    </location>
</feature>
<feature type="compositionally biased region" description="Acidic residues" evidence="1">
    <location>
        <begin position="94"/>
        <end position="129"/>
    </location>
</feature>
<feature type="compositionally biased region" description="Basic and acidic residues" evidence="1">
    <location>
        <begin position="156"/>
        <end position="165"/>
    </location>
</feature>
<feature type="compositionally biased region" description="Acidic residues" evidence="1">
    <location>
        <begin position="168"/>
        <end position="195"/>
    </location>
</feature>
<feature type="modified residue" description="N-acetylalanine" evidence="16">
    <location>
        <position position="2"/>
    </location>
</feature>
<feature type="modified residue" description="Phosphoserine" evidence="20">
    <location>
        <position position="61"/>
    </location>
</feature>
<feature type="modified residue" description="Phosphoserine" evidence="20">
    <location>
        <position position="63"/>
    </location>
</feature>
<feature type="modified residue" description="Phosphoserine" evidence="20">
    <location>
        <position position="150"/>
    </location>
</feature>
<feature type="modified residue" description="Phosphoserine" evidence="20">
    <location>
        <position position="155"/>
    </location>
</feature>
<feature type="modified residue" description="Phosphoserine" evidence="18 19 20">
    <location>
        <position position="203"/>
    </location>
</feature>
<feature type="modified residue" description="Phosphoserine" evidence="20">
    <location>
        <position position="273"/>
    </location>
</feature>
<feature type="modified residue" description="Phosphoserine" evidence="15 17 18 19">
    <location>
        <position position="316"/>
    </location>
</feature>
<feature type="modified residue" description="Phosphoserine" evidence="15 17 18 19">
    <location>
        <position position="320"/>
    </location>
</feature>
<feature type="modified residue" description="Phosphoserine" evidence="15 17 18 19">
    <location>
        <position position="321"/>
    </location>
</feature>
<feature type="sequence conflict" description="In Ref. 2; AAD52016." evidence="11" ref="2">
    <original>AG</original>
    <variation>GR</variation>
    <location>
        <begin position="2"/>
        <end position="3"/>
    </location>
</feature>
<feature type="sequence conflict" description="In Ref. 2; AAD52016." evidence="11" ref="2">
    <location>
        <begin position="4"/>
        <end position="5"/>
    </location>
</feature>
<feature type="sequence conflict" description="In Ref. 2; AAD52016." evidence="11" ref="2">
    <original>S</original>
    <variation>T</variation>
    <location>
        <position position="139"/>
    </location>
</feature>
<feature type="sequence conflict" description="In Ref. 2; AAD52016." evidence="11" ref="2">
    <original>L</original>
    <variation>V</variation>
    <location>
        <position position="262"/>
    </location>
</feature>
<feature type="sequence conflict" description="In Ref. 2; AAD52016." evidence="11" ref="2">
    <original>S</original>
    <variation>A</variation>
    <location>
        <position position="272"/>
    </location>
</feature>
<feature type="sequence conflict" description="In Ref. 2; AAD52016." evidence="11" ref="2">
    <original>L</original>
    <variation>V</variation>
    <location>
        <position position="306"/>
    </location>
</feature>
<feature type="sequence conflict" description="In Ref. 2; AAD52016." evidence="11" ref="2">
    <original>D</original>
    <variation>C</variation>
    <location>
        <position position="402"/>
    </location>
</feature>
<dbReference type="EMBL" id="AJ249940">
    <property type="protein sequence ID" value="CAB57451.2"/>
    <property type="molecule type" value="mRNA"/>
</dbReference>
<dbReference type="EMBL" id="AF083208">
    <property type="protein sequence ID" value="AAD52016.1"/>
    <property type="status" value="ALT_FRAME"/>
    <property type="molecule type" value="mRNA"/>
</dbReference>
<dbReference type="EMBL" id="AK057229">
    <property type="protein sequence ID" value="BAG51888.1"/>
    <property type="molecule type" value="mRNA"/>
</dbReference>
<dbReference type="EMBL" id="AC003103">
    <property type="status" value="NOT_ANNOTATED_CDS"/>
    <property type="molecule type" value="Genomic_DNA"/>
</dbReference>
<dbReference type="EMBL" id="CH471199">
    <property type="protein sequence ID" value="EAW57575.1"/>
    <property type="molecule type" value="Genomic_DNA"/>
</dbReference>
<dbReference type="EMBL" id="BC000591">
    <property type="protein sequence ID" value="AAH00591.1"/>
    <property type="molecule type" value="mRNA"/>
</dbReference>
<dbReference type="EMBL" id="AF161395">
    <property type="protein sequence ID" value="AAF28955.1"/>
    <property type="molecule type" value="mRNA"/>
</dbReference>
<dbReference type="CCDS" id="CCDS32632.1"/>
<dbReference type="RefSeq" id="NP_036270.1">
    <property type="nucleotide sequence ID" value="NM_012138.4"/>
</dbReference>
<dbReference type="PDB" id="5W6A">
    <property type="method" value="X-ray"/>
    <property type="resolution" value="1.74 A"/>
    <property type="chains" value="E/F=539-547"/>
</dbReference>
<dbReference type="PDB" id="7MQ8">
    <property type="method" value="EM"/>
    <property type="resolution" value="3.60 A"/>
    <property type="chains" value="NN=1-560"/>
</dbReference>
<dbReference type="PDB" id="7MQ9">
    <property type="method" value="EM"/>
    <property type="resolution" value="3.87 A"/>
    <property type="chains" value="NN=1-560"/>
</dbReference>
<dbReference type="PDBsum" id="5W6A"/>
<dbReference type="PDBsum" id="7MQ8"/>
<dbReference type="PDBsum" id="7MQ9"/>
<dbReference type="EMDB" id="EMD-23936"/>
<dbReference type="EMDB" id="EMD-23937"/>
<dbReference type="SMR" id="Q9NY61"/>
<dbReference type="BioGRID" id="117743">
    <property type="interactions" value="370"/>
</dbReference>
<dbReference type="ComplexPortal" id="CPX-2511">
    <property type="entry name" value="Small ribosomal subunit processome"/>
</dbReference>
<dbReference type="CORUM" id="Q9NY61"/>
<dbReference type="ELM" id="Q9NY61"/>
<dbReference type="FunCoup" id="Q9NY61">
    <property type="interactions" value="3643"/>
</dbReference>
<dbReference type="IntAct" id="Q9NY61">
    <property type="interactions" value="122"/>
</dbReference>
<dbReference type="MINT" id="Q9NY61"/>
<dbReference type="STRING" id="9606.ENSP00000477848"/>
<dbReference type="GlyGen" id="Q9NY61">
    <property type="glycosylation" value="3 sites, 1 O-linked glycan (2 sites)"/>
</dbReference>
<dbReference type="iPTMnet" id="Q9NY61"/>
<dbReference type="MetOSite" id="Q9NY61"/>
<dbReference type="PhosphoSitePlus" id="Q9NY61"/>
<dbReference type="SwissPalm" id="Q9NY61"/>
<dbReference type="BioMuta" id="AATF"/>
<dbReference type="DMDM" id="71152211"/>
<dbReference type="jPOST" id="Q9NY61"/>
<dbReference type="MassIVE" id="Q9NY61"/>
<dbReference type="PaxDb" id="9606-ENSP00000477848"/>
<dbReference type="PeptideAtlas" id="Q9NY61"/>
<dbReference type="ProteomicsDB" id="83181"/>
<dbReference type="Pumba" id="Q9NY61"/>
<dbReference type="TopDownProteomics" id="Q9NY61"/>
<dbReference type="Antibodypedia" id="72876">
    <property type="antibodies" value="347 antibodies from 37 providers"/>
</dbReference>
<dbReference type="DNASU" id="26574"/>
<dbReference type="Ensembl" id="ENST00000619387.5">
    <property type="protein sequence ID" value="ENSP00000477848.1"/>
    <property type="gene ID" value="ENSG00000275700.6"/>
</dbReference>
<dbReference type="Ensembl" id="ENST00000620004.2">
    <property type="protein sequence ID" value="ENSP00000481894.1"/>
    <property type="gene ID" value="ENSG00000276072.2"/>
</dbReference>
<dbReference type="GeneID" id="26574"/>
<dbReference type="KEGG" id="hsa:26574"/>
<dbReference type="MANE-Select" id="ENST00000619387.5">
    <property type="protein sequence ID" value="ENSP00000477848.1"/>
    <property type="RefSeq nucleotide sequence ID" value="NM_012138.4"/>
    <property type="RefSeq protein sequence ID" value="NP_036270.1"/>
</dbReference>
<dbReference type="UCSC" id="uc002hni.3">
    <property type="organism name" value="human"/>
</dbReference>
<dbReference type="AGR" id="HGNC:19235"/>
<dbReference type="CTD" id="26574"/>
<dbReference type="DisGeNET" id="26574"/>
<dbReference type="GeneCards" id="AATF"/>
<dbReference type="HGNC" id="HGNC:19235">
    <property type="gene designation" value="AATF"/>
</dbReference>
<dbReference type="HPA" id="ENSG00000275700">
    <property type="expression patterns" value="Low tissue specificity"/>
</dbReference>
<dbReference type="MIM" id="608463">
    <property type="type" value="gene"/>
</dbReference>
<dbReference type="neXtProt" id="NX_Q9NY61"/>
<dbReference type="OpenTargets" id="ENSG00000275700"/>
<dbReference type="PharmGKB" id="PA128395780"/>
<dbReference type="VEuPathDB" id="HostDB:ENSG00000275700"/>
<dbReference type="eggNOG" id="KOG2773">
    <property type="taxonomic scope" value="Eukaryota"/>
</dbReference>
<dbReference type="GeneTree" id="ENSGT00390000000288"/>
<dbReference type="HOGENOM" id="CLU_018299_1_2_1"/>
<dbReference type="InParanoid" id="Q9NY61"/>
<dbReference type="OMA" id="INFMAPN"/>
<dbReference type="OrthoDB" id="5783963at2759"/>
<dbReference type="PAN-GO" id="Q9NY61">
    <property type="GO annotations" value="2 GO annotations based on evolutionary models"/>
</dbReference>
<dbReference type="PhylomeDB" id="Q9NY61"/>
<dbReference type="TreeFam" id="TF324341"/>
<dbReference type="PathwayCommons" id="Q9NY61"/>
<dbReference type="Reactome" id="R-HSA-193648">
    <property type="pathway name" value="NRAGE signals death through JNK"/>
</dbReference>
<dbReference type="SignaLink" id="Q9NY61"/>
<dbReference type="SIGNOR" id="Q9NY61"/>
<dbReference type="BioGRID-ORCS" id="26574">
    <property type="hits" value="615 hits in 1168 CRISPR screens"/>
</dbReference>
<dbReference type="CD-CODE" id="91857CE7">
    <property type="entry name" value="Nucleolus"/>
</dbReference>
<dbReference type="ChiTaRS" id="AATF">
    <property type="organism name" value="human"/>
</dbReference>
<dbReference type="GeneWiki" id="Apoptosis-antagonizing_transcription_factor"/>
<dbReference type="GenomeRNAi" id="26574"/>
<dbReference type="Pharos" id="Q9NY61">
    <property type="development level" value="Tbio"/>
</dbReference>
<dbReference type="PRO" id="PR:Q9NY61"/>
<dbReference type="Proteomes" id="UP000005640">
    <property type="component" value="Chromosome 17"/>
</dbReference>
<dbReference type="RNAct" id="Q9NY61">
    <property type="molecule type" value="protein"/>
</dbReference>
<dbReference type="Bgee" id="ENSG00000275700">
    <property type="expression patterns" value="Expressed in monocyte and 100 other cell types or tissues"/>
</dbReference>
<dbReference type="ExpressionAtlas" id="Q9NY61">
    <property type="expression patterns" value="baseline and differential"/>
</dbReference>
<dbReference type="GO" id="GO:0005737">
    <property type="term" value="C:cytoplasm"/>
    <property type="evidence" value="ECO:0000314"/>
    <property type="project" value="UniProtKB"/>
</dbReference>
<dbReference type="GO" id="GO:0005730">
    <property type="term" value="C:nucleolus"/>
    <property type="evidence" value="ECO:0000314"/>
    <property type="project" value="HPA"/>
</dbReference>
<dbReference type="GO" id="GO:0005654">
    <property type="term" value="C:nucleoplasm"/>
    <property type="evidence" value="ECO:0000314"/>
    <property type="project" value="HPA"/>
</dbReference>
<dbReference type="GO" id="GO:0005634">
    <property type="term" value="C:nucleus"/>
    <property type="evidence" value="ECO:0000314"/>
    <property type="project" value="UniProtKB"/>
</dbReference>
<dbReference type="GO" id="GO:0032040">
    <property type="term" value="C:small-subunit processome"/>
    <property type="evidence" value="ECO:0000314"/>
    <property type="project" value="UniProtKB"/>
</dbReference>
<dbReference type="GO" id="GO:0005667">
    <property type="term" value="C:transcription regulator complex"/>
    <property type="evidence" value="ECO:0007669"/>
    <property type="project" value="Ensembl"/>
</dbReference>
<dbReference type="GO" id="GO:0043522">
    <property type="term" value="F:leucine zipper domain binding"/>
    <property type="evidence" value="ECO:0000353"/>
    <property type="project" value="UniProtKB"/>
</dbReference>
<dbReference type="GO" id="GO:0003723">
    <property type="term" value="F:RNA binding"/>
    <property type="evidence" value="ECO:0007005"/>
    <property type="project" value="UniProtKB"/>
</dbReference>
<dbReference type="GO" id="GO:0007155">
    <property type="term" value="P:cell adhesion"/>
    <property type="evidence" value="ECO:0007669"/>
    <property type="project" value="Ensembl"/>
</dbReference>
<dbReference type="GO" id="GO:0040016">
    <property type="term" value="P:embryonic cleavage"/>
    <property type="evidence" value="ECO:0007669"/>
    <property type="project" value="Ensembl"/>
</dbReference>
<dbReference type="GO" id="GO:0042985">
    <property type="term" value="P:negative regulation of amyloid precursor protein biosynthetic process"/>
    <property type="evidence" value="ECO:0007669"/>
    <property type="project" value="Ensembl"/>
</dbReference>
<dbReference type="GO" id="GO:2001234">
    <property type="term" value="P:negative regulation of apoptotic signaling pathway"/>
    <property type="evidence" value="ECO:0007669"/>
    <property type="project" value="Ensembl"/>
</dbReference>
<dbReference type="GO" id="GO:0007346">
    <property type="term" value="P:regulation of mitotic cell cycle"/>
    <property type="evidence" value="ECO:0007669"/>
    <property type="project" value="Ensembl"/>
</dbReference>
<dbReference type="GO" id="GO:0042274">
    <property type="term" value="P:ribosomal small subunit biogenesis"/>
    <property type="evidence" value="ECO:0000314"/>
    <property type="project" value="UniProtKB"/>
</dbReference>
<dbReference type="InterPro" id="IPR025160">
    <property type="entry name" value="AATF"/>
</dbReference>
<dbReference type="InterPro" id="IPR039223">
    <property type="entry name" value="AATF/Bfr2"/>
</dbReference>
<dbReference type="InterPro" id="IPR012617">
    <property type="entry name" value="AATF_C"/>
</dbReference>
<dbReference type="PANTHER" id="PTHR15565">
    <property type="entry name" value="AATF PROTEIN APOPTOSIS ANTAGONIZING TRANSCRIPTION FACTOR"/>
    <property type="match status" value="1"/>
</dbReference>
<dbReference type="PANTHER" id="PTHR15565:SF0">
    <property type="entry name" value="PROTEIN AATF"/>
    <property type="match status" value="1"/>
</dbReference>
<dbReference type="Pfam" id="PF13339">
    <property type="entry name" value="AATF-Che1"/>
    <property type="match status" value="1"/>
</dbReference>
<dbReference type="Pfam" id="PF08164">
    <property type="entry name" value="TRAUB"/>
    <property type="match status" value="1"/>
</dbReference>
<evidence type="ECO:0000256" key="1">
    <source>
        <dbReference type="SAM" id="MobiDB-lite"/>
    </source>
</evidence>
<evidence type="ECO:0000269" key="2">
    <source>
    </source>
</evidence>
<evidence type="ECO:0000269" key="3">
    <source>
    </source>
</evidence>
<evidence type="ECO:0000269" key="4">
    <source>
    </source>
</evidence>
<evidence type="ECO:0000269" key="5">
    <source>
    </source>
</evidence>
<evidence type="ECO:0000269" key="6">
    <source>
    </source>
</evidence>
<evidence type="ECO:0000269" key="7">
    <source>
    </source>
</evidence>
<evidence type="ECO:0000269" key="8">
    <source>
    </source>
</evidence>
<evidence type="ECO:0000269" key="9">
    <source>
    </source>
</evidence>
<evidence type="ECO:0000269" key="10">
    <source>
    </source>
</evidence>
<evidence type="ECO:0000305" key="11"/>
<evidence type="ECO:0000312" key="12">
    <source>
        <dbReference type="HGNC" id="HGNC:19235"/>
    </source>
</evidence>
<evidence type="ECO:0007744" key="13">
    <source>
        <dbReference type="PDB" id="7MQ8"/>
    </source>
</evidence>
<evidence type="ECO:0007744" key="14">
    <source>
        <dbReference type="PDB" id="7MQ9"/>
    </source>
</evidence>
<evidence type="ECO:0007744" key="15">
    <source>
    </source>
</evidence>
<evidence type="ECO:0007744" key="16">
    <source>
    </source>
</evidence>
<evidence type="ECO:0007744" key="17">
    <source>
    </source>
</evidence>
<evidence type="ECO:0007744" key="18">
    <source>
    </source>
</evidence>
<evidence type="ECO:0007744" key="19">
    <source>
    </source>
</evidence>
<evidence type="ECO:0007744" key="20">
    <source>
    </source>
</evidence>